<reference evidence="3" key="1">
    <citation type="journal article" date="2008" name="J. Bacteriol.">
        <title>Complete genome sequence of uropathogenic Proteus mirabilis, a master of both adherence and motility.</title>
        <authorList>
            <person name="Pearson M.M."/>
            <person name="Sebaihia M."/>
            <person name="Churcher C."/>
            <person name="Quail M.A."/>
            <person name="Seshasayee A.S."/>
            <person name="Luscombe N.M."/>
            <person name="Abdellah Z."/>
            <person name="Arrosmith C."/>
            <person name="Atkin B."/>
            <person name="Chillingworth T."/>
            <person name="Hauser H."/>
            <person name="Jagels K."/>
            <person name="Moule S."/>
            <person name="Mungall K."/>
            <person name="Norbertczak H."/>
            <person name="Rabbinowitsch E."/>
            <person name="Walker D."/>
            <person name="Whithead S."/>
            <person name="Thomson N.R."/>
            <person name="Rather P.N."/>
            <person name="Parkhill J."/>
            <person name="Mobley H.L.T."/>
        </authorList>
    </citation>
    <scope>NUCLEOTIDE SEQUENCE [LARGE SCALE GENOMIC DNA]</scope>
    <source>
        <strain evidence="3">HI4320</strain>
    </source>
</reference>
<comment type="function">
    <text evidence="1">Structural component of flagellum, the bacterial motility apparatus. Part of the rod structure of flagellar basal body (By similarity).</text>
</comment>
<comment type="subunit">
    <text evidence="1">The basal body constitutes a major portion of the flagellar organelle and consists of a number of rings mounted on a central rod. In Gram-negative bacteria, at least four rings, L, P, S and M are present, whereas Gram-positive bacteria lack the L and P rings. The rod consists of about 26 subunits of FlgG in the distal portion, and FlgB, FlgC and FlgF build up the proximal portion of the rod with about 6 subunits each. Rod assembly occurs by export via the flagellum-specific pathway of its constituent proteins and by their incorporation into the rod structure in the probable order of FlgB, FlgC, FlgF and FlgG. Another protein, FliE, also assembles onto the stable rod structure (By similarity).</text>
</comment>
<comment type="subcellular location">
    <subcellularLocation>
        <location evidence="1">Bacterial flagellum basal body</location>
    </subcellularLocation>
</comment>
<comment type="similarity">
    <text evidence="2">Belongs to the flagella basal body rod proteins family.</text>
</comment>
<sequence length="137" mass="15506">MLDKLENTFHFQQEALSLRNKRQEILAANIANADTPGFQARDIDFAAELKKTMENGRTGSHGLQLTMTSERHIPIKPGYRLEADLLYRVPHQTSMDGNTVDMDMERSNFADNSVKYQADVTFINSQVKSMMAVLQQG</sequence>
<evidence type="ECO:0000250" key="1">
    <source>
        <dbReference type="UniProtKB" id="P16437"/>
    </source>
</evidence>
<evidence type="ECO:0000255" key="2"/>
<evidence type="ECO:0000312" key="3">
    <source>
        <dbReference type="EMBL" id="CAR43449.1"/>
    </source>
</evidence>
<keyword id="KW-0975">Bacterial flagellum</keyword>
<keyword id="KW-1185">Reference proteome</keyword>
<proteinExistence type="inferred from homology"/>
<accession>B4EYN9</accession>
<protein>
    <recommendedName>
        <fullName evidence="1 3">Flagellar basal body rod protein FlgB</fullName>
    </recommendedName>
</protein>
<feature type="chain" id="PRO_0000415704" description="Flagellar basal body rod protein FlgB">
    <location>
        <begin position="1"/>
        <end position="137"/>
    </location>
</feature>
<gene>
    <name evidence="3" type="primary">flgB</name>
    <name type="ordered locus">PMI1654</name>
</gene>
<dbReference type="EMBL" id="AM942759">
    <property type="protein sequence ID" value="CAR43449.1"/>
    <property type="molecule type" value="Genomic_DNA"/>
</dbReference>
<dbReference type="RefSeq" id="WP_004243538.1">
    <property type="nucleotide sequence ID" value="NC_010554.1"/>
</dbReference>
<dbReference type="SMR" id="B4EYN9"/>
<dbReference type="EnsemblBacteria" id="CAR43449">
    <property type="protein sequence ID" value="CAR43449"/>
    <property type="gene ID" value="PMI1654"/>
</dbReference>
<dbReference type="GeneID" id="6800483"/>
<dbReference type="KEGG" id="pmr:PMI1654"/>
<dbReference type="eggNOG" id="COG1815">
    <property type="taxonomic scope" value="Bacteria"/>
</dbReference>
<dbReference type="HOGENOM" id="CLU_125463_1_0_6"/>
<dbReference type="Proteomes" id="UP000008319">
    <property type="component" value="Chromosome"/>
</dbReference>
<dbReference type="GO" id="GO:0030694">
    <property type="term" value="C:bacterial-type flagellum basal body, rod"/>
    <property type="evidence" value="ECO:0007669"/>
    <property type="project" value="InterPro"/>
</dbReference>
<dbReference type="GO" id="GO:0071973">
    <property type="term" value="P:bacterial-type flagellum-dependent cell motility"/>
    <property type="evidence" value="ECO:0007669"/>
    <property type="project" value="InterPro"/>
</dbReference>
<dbReference type="InterPro" id="IPR001444">
    <property type="entry name" value="Flag_bb_rod_N"/>
</dbReference>
<dbReference type="InterPro" id="IPR019776">
    <property type="entry name" value="Flagellar_basal_body_rod_CS"/>
</dbReference>
<dbReference type="InterPro" id="IPR006300">
    <property type="entry name" value="FlgB"/>
</dbReference>
<dbReference type="NCBIfam" id="TIGR01396">
    <property type="entry name" value="FlgB"/>
    <property type="match status" value="1"/>
</dbReference>
<dbReference type="PANTHER" id="PTHR30435:SF12">
    <property type="entry name" value="FLAGELLAR BASAL BODY ROD PROTEIN FLGB"/>
    <property type="match status" value="1"/>
</dbReference>
<dbReference type="PANTHER" id="PTHR30435">
    <property type="entry name" value="FLAGELLAR PROTEIN"/>
    <property type="match status" value="1"/>
</dbReference>
<dbReference type="Pfam" id="PF00460">
    <property type="entry name" value="Flg_bb_rod"/>
    <property type="match status" value="1"/>
</dbReference>
<dbReference type="PIRSF" id="PIRSF002889">
    <property type="entry name" value="Rod_FlgB"/>
    <property type="match status" value="1"/>
</dbReference>
<dbReference type="PROSITE" id="PS00588">
    <property type="entry name" value="FLAGELLA_BB_ROD"/>
    <property type="match status" value="1"/>
</dbReference>
<organism>
    <name type="scientific">Proteus mirabilis (strain HI4320)</name>
    <dbReference type="NCBI Taxonomy" id="529507"/>
    <lineage>
        <taxon>Bacteria</taxon>
        <taxon>Pseudomonadati</taxon>
        <taxon>Pseudomonadota</taxon>
        <taxon>Gammaproteobacteria</taxon>
        <taxon>Enterobacterales</taxon>
        <taxon>Morganellaceae</taxon>
        <taxon>Proteus</taxon>
    </lineage>
</organism>
<name>FLGB_PROMH</name>